<accession>Q5U3S7</accession>
<organism>
    <name type="scientific">Danio rerio</name>
    <name type="common">Zebrafish</name>
    <name type="synonym">Brachydanio rerio</name>
    <dbReference type="NCBI Taxonomy" id="7955"/>
    <lineage>
        <taxon>Eukaryota</taxon>
        <taxon>Metazoa</taxon>
        <taxon>Chordata</taxon>
        <taxon>Craniata</taxon>
        <taxon>Vertebrata</taxon>
        <taxon>Euteleostomi</taxon>
        <taxon>Actinopterygii</taxon>
        <taxon>Neopterygii</taxon>
        <taxon>Teleostei</taxon>
        <taxon>Ostariophysi</taxon>
        <taxon>Cypriniformes</taxon>
        <taxon>Danionidae</taxon>
        <taxon>Danioninae</taxon>
        <taxon>Danio</taxon>
    </lineage>
</organism>
<comment type="function">
    <text evidence="2 3">E3 ubiquitin-protein ligase that is essential for proper development of the forebrain, the eye, and the face (By similarity). Negatively regulates nitric oxide production by inducing nitric oxide synthase translocation to actin cytoskeleton and inhibiting its enzymatic activity (By similarity).</text>
</comment>
<comment type="catalytic activity">
    <reaction>
        <text>S-ubiquitinyl-[E2 ubiquitin-conjugating enzyme]-L-cysteine + [acceptor protein]-L-lysine = [E2 ubiquitin-conjugating enzyme]-L-cysteine + N(6)-ubiquitinyl-[acceptor protein]-L-lysine.</text>
        <dbReference type="EC" id="2.3.2.27"/>
    </reaction>
</comment>
<comment type="subcellular location">
    <subcellularLocation>
        <location evidence="3">Cytoplasm</location>
    </subcellularLocation>
    <subcellularLocation>
        <location evidence="3">Nucleus</location>
    </subcellularLocation>
    <text evidence="3">Translocates from nucleus to cytoplasm in the G2 phase of the cell cycle.</text>
</comment>
<comment type="similarity">
    <text evidence="5">Belongs to the NOSIP family.</text>
</comment>
<sequence>MTRHGKNCTAGAVYTYHEKRKDTAASGYGTQSVRLGKDAIKDFDCCSLSLQPCRDPVLTEDGYLYEKEAILQYILHQKTEIAKKMKAYEKQKQALKSEGQLESKSEERERAEKFKQRENNIVSKPINPFTSGKSKDEGNQNGSTSSSSTDTSSGESSSSSALPSFWIPSLTPEAKPTLLKKPSKTVSCPMSGRPLKMSDLITVRFTPLDPSLDRVALLTRQDRYVCAVTKDTLGNSVPCAVLRPSGVVVTMECVEKLIKKDMVDPITGDKLKEKDIIPIQRGGTGFAGSGVDLKAKEARPVMQA</sequence>
<dbReference type="EC" id="2.3.2.27"/>
<dbReference type="EMBL" id="BC085409">
    <property type="protein sequence ID" value="AAH85409.1"/>
    <property type="molecule type" value="mRNA"/>
</dbReference>
<dbReference type="RefSeq" id="NP_001007435.1">
    <property type="nucleotide sequence ID" value="NM_001007434.1"/>
</dbReference>
<dbReference type="RefSeq" id="XP_005164079.1">
    <property type="nucleotide sequence ID" value="XM_005164022.5"/>
</dbReference>
<dbReference type="RefSeq" id="XP_009297811.1">
    <property type="nucleotide sequence ID" value="XM_009299536.4"/>
</dbReference>
<dbReference type="SMR" id="Q5U3S7"/>
<dbReference type="FunCoup" id="Q5U3S7">
    <property type="interactions" value="2241"/>
</dbReference>
<dbReference type="STRING" id="7955.ENSDARP00000055311"/>
<dbReference type="PaxDb" id="7955-ENSDARP00000055311"/>
<dbReference type="DNASU" id="492793"/>
<dbReference type="Ensembl" id="ENSDART00000055312">
    <property type="protein sequence ID" value="ENSDARP00000055311"/>
    <property type="gene ID" value="ENSDARG00000037958"/>
</dbReference>
<dbReference type="Ensembl" id="ENSDART00000165909">
    <property type="protein sequence ID" value="ENSDARP00000139361"/>
    <property type="gene ID" value="ENSDARG00000037958"/>
</dbReference>
<dbReference type="Ensembl" id="ENSDART00000186409">
    <property type="protein sequence ID" value="ENSDARP00000157364"/>
    <property type="gene ID" value="ENSDARG00000112335"/>
</dbReference>
<dbReference type="GeneID" id="492793"/>
<dbReference type="KEGG" id="dre:492793"/>
<dbReference type="AGR" id="ZFIN:ZDB-GENE-041114-146"/>
<dbReference type="CTD" id="51070"/>
<dbReference type="ZFIN" id="ZDB-GENE-041114-146">
    <property type="gene designation" value="nosip"/>
</dbReference>
<dbReference type="eggNOG" id="KOG3039">
    <property type="taxonomic scope" value="Eukaryota"/>
</dbReference>
<dbReference type="InParanoid" id="Q5U3S7"/>
<dbReference type="OMA" id="PCVTKFM"/>
<dbReference type="OrthoDB" id="116827at2759"/>
<dbReference type="PhylomeDB" id="Q5U3S7"/>
<dbReference type="TreeFam" id="TF314268"/>
<dbReference type="PRO" id="PR:Q5U3S7"/>
<dbReference type="Proteomes" id="UP000000437">
    <property type="component" value="Alternate scaffold 3"/>
</dbReference>
<dbReference type="Proteomes" id="UP000000437">
    <property type="component" value="Chromosome 3"/>
</dbReference>
<dbReference type="Bgee" id="ENSDARG00000037958">
    <property type="expression patterns" value="Expressed in mature ovarian follicle and 22 other cell types or tissues"/>
</dbReference>
<dbReference type="ExpressionAtlas" id="Q5U3S7">
    <property type="expression patterns" value="baseline and differential"/>
</dbReference>
<dbReference type="GO" id="GO:0005737">
    <property type="term" value="C:cytoplasm"/>
    <property type="evidence" value="ECO:0007669"/>
    <property type="project" value="UniProtKB-SubCell"/>
</dbReference>
<dbReference type="GO" id="GO:0005634">
    <property type="term" value="C:nucleus"/>
    <property type="evidence" value="ECO:0000318"/>
    <property type="project" value="GO_Central"/>
</dbReference>
<dbReference type="GO" id="GO:0061630">
    <property type="term" value="F:ubiquitin protein ligase activity"/>
    <property type="evidence" value="ECO:0007669"/>
    <property type="project" value="InterPro"/>
</dbReference>
<dbReference type="CDD" id="cd16661">
    <property type="entry name" value="RING-Ubox1_NOSIP"/>
    <property type="match status" value="1"/>
</dbReference>
<dbReference type="CDD" id="cd16662">
    <property type="entry name" value="RING-Ubox2_NOSIP"/>
    <property type="match status" value="1"/>
</dbReference>
<dbReference type="FunFam" id="3.30.40.10:FF:000251">
    <property type="entry name" value="Nitric oxide synthase-interacting protein"/>
    <property type="match status" value="1"/>
</dbReference>
<dbReference type="FunFam" id="3.30.40.10:FF:001144">
    <property type="entry name" value="Nitric oxide synthase-interacting protein"/>
    <property type="match status" value="1"/>
</dbReference>
<dbReference type="Gene3D" id="3.30.40.10">
    <property type="entry name" value="Zinc/RING finger domain, C3HC4 (zinc finger)"/>
    <property type="match status" value="2"/>
</dbReference>
<dbReference type="InterPro" id="IPR016818">
    <property type="entry name" value="NOSIP"/>
</dbReference>
<dbReference type="InterPro" id="IPR031790">
    <property type="entry name" value="Znf-NOSIP"/>
</dbReference>
<dbReference type="InterPro" id="IPR013083">
    <property type="entry name" value="Znf_RING/FYVE/PHD"/>
</dbReference>
<dbReference type="PANTHER" id="PTHR13063">
    <property type="entry name" value="ENOS INTERACTING PROTEIN"/>
    <property type="match status" value="1"/>
</dbReference>
<dbReference type="PANTHER" id="PTHR13063:SF10">
    <property type="entry name" value="NITRIC OXIDE SYNTHASE-INTERACTING PROTEIN"/>
    <property type="match status" value="1"/>
</dbReference>
<dbReference type="Pfam" id="PF15906">
    <property type="entry name" value="zf-NOSIP"/>
    <property type="match status" value="1"/>
</dbReference>
<dbReference type="PIRSF" id="PIRSF023577">
    <property type="entry name" value="ENOS_interacting"/>
    <property type="match status" value="1"/>
</dbReference>
<dbReference type="SUPFAM" id="SSF57850">
    <property type="entry name" value="RING/U-box"/>
    <property type="match status" value="2"/>
</dbReference>
<feature type="chain" id="PRO_0000280588" description="Nitric oxide synthase-interacting protein">
    <location>
        <begin position="1"/>
        <end position="304"/>
    </location>
</feature>
<feature type="region of interest" description="Disordered" evidence="4">
    <location>
        <begin position="94"/>
        <end position="165"/>
    </location>
</feature>
<feature type="short sequence motif" description="Nuclear localization signal" evidence="1">
    <location>
        <begin position="78"/>
        <end position="101"/>
    </location>
</feature>
<feature type="compositionally biased region" description="Basic and acidic residues" evidence="4">
    <location>
        <begin position="99"/>
        <end position="118"/>
    </location>
</feature>
<feature type="compositionally biased region" description="Low complexity" evidence="4">
    <location>
        <begin position="143"/>
        <end position="160"/>
    </location>
</feature>
<proteinExistence type="evidence at transcript level"/>
<reference key="1">
    <citation type="submission" date="2004-11" db="EMBL/GenBank/DDBJ databases">
        <authorList>
            <consortium name="NIH - Zebrafish Gene Collection (ZGC) project"/>
        </authorList>
    </citation>
    <scope>NUCLEOTIDE SEQUENCE [LARGE SCALE MRNA]</scope>
    <source>
        <tissue>Embryo</tissue>
    </source>
</reference>
<evidence type="ECO:0000250" key="1"/>
<evidence type="ECO:0000250" key="2">
    <source>
        <dbReference type="UniProtKB" id="Q9D6T0"/>
    </source>
</evidence>
<evidence type="ECO:0000250" key="3">
    <source>
        <dbReference type="UniProtKB" id="Q9Y314"/>
    </source>
</evidence>
<evidence type="ECO:0000256" key="4">
    <source>
        <dbReference type="SAM" id="MobiDB-lite"/>
    </source>
</evidence>
<evidence type="ECO:0000305" key="5"/>
<name>NOSIP_DANRE</name>
<gene>
    <name type="primary">nosip</name>
    <name type="ORF">zgc:101669</name>
</gene>
<protein>
    <recommendedName>
        <fullName>Nitric oxide synthase-interacting protein</fullName>
    </recommendedName>
    <alternativeName>
        <fullName>E3 ubiquitin-protein ligase NOSIP</fullName>
        <ecNumber>2.3.2.27</ecNumber>
    </alternativeName>
    <alternativeName>
        <fullName evidence="5">RING-type E3 ubiquitin transferase NOSIP</fullName>
    </alternativeName>
</protein>
<keyword id="KW-0963">Cytoplasm</keyword>
<keyword id="KW-0217">Developmental protein</keyword>
<keyword id="KW-0539">Nucleus</keyword>
<keyword id="KW-1185">Reference proteome</keyword>
<keyword id="KW-0808">Transferase</keyword>
<keyword id="KW-0833">Ubl conjugation pathway</keyword>